<protein>
    <recommendedName>
        <fullName evidence="1">Small ribosomal subunit protein uS11</fullName>
    </recommendedName>
    <alternativeName>
        <fullName evidence="2">30S ribosomal protein S11</fullName>
    </alternativeName>
</protein>
<feature type="chain" id="PRO_1000051854" description="Small ribosomal subunit protein uS11">
    <location>
        <begin position="1"/>
        <end position="130"/>
    </location>
</feature>
<comment type="function">
    <text evidence="1">Located on the platform of the 30S subunit, it bridges several disparate RNA helices of the 16S rRNA. Forms part of the Shine-Dalgarno cleft in the 70S ribosome.</text>
</comment>
<comment type="subunit">
    <text evidence="1">Part of the 30S ribosomal subunit. Interacts with proteins S7 and S18. Binds to IF-3.</text>
</comment>
<comment type="similarity">
    <text evidence="1">Belongs to the universal ribosomal protein uS11 family.</text>
</comment>
<sequence>MAKVPSRSPRKRVRKQVADGMAHIHASFNNTIVTITDRQGNALSWATSGGSGFRGSRKSTPFAAQVAAERAGAAAQDYGLKNLEVFVKGPGPGRESAIRALNAVGYKITNITDVTPIPHNGCRPPKKRRV</sequence>
<dbReference type="EMBL" id="CP000753">
    <property type="protein sequence ID" value="ABS06390.1"/>
    <property type="molecule type" value="Genomic_DNA"/>
</dbReference>
<dbReference type="RefSeq" id="WP_006083577.1">
    <property type="nucleotide sequence ID" value="NC_009665.1"/>
</dbReference>
<dbReference type="SMR" id="A6WHV1"/>
<dbReference type="GeneID" id="94726209"/>
<dbReference type="KEGG" id="sbm:Shew185_0219"/>
<dbReference type="HOGENOM" id="CLU_072439_5_0_6"/>
<dbReference type="GO" id="GO:1990904">
    <property type="term" value="C:ribonucleoprotein complex"/>
    <property type="evidence" value="ECO:0007669"/>
    <property type="project" value="UniProtKB-KW"/>
</dbReference>
<dbReference type="GO" id="GO:0005840">
    <property type="term" value="C:ribosome"/>
    <property type="evidence" value="ECO:0007669"/>
    <property type="project" value="UniProtKB-KW"/>
</dbReference>
<dbReference type="GO" id="GO:0019843">
    <property type="term" value="F:rRNA binding"/>
    <property type="evidence" value="ECO:0007669"/>
    <property type="project" value="UniProtKB-UniRule"/>
</dbReference>
<dbReference type="GO" id="GO:0003735">
    <property type="term" value="F:structural constituent of ribosome"/>
    <property type="evidence" value="ECO:0007669"/>
    <property type="project" value="InterPro"/>
</dbReference>
<dbReference type="GO" id="GO:0006412">
    <property type="term" value="P:translation"/>
    <property type="evidence" value="ECO:0007669"/>
    <property type="project" value="UniProtKB-UniRule"/>
</dbReference>
<dbReference type="FunFam" id="3.30.420.80:FF:000001">
    <property type="entry name" value="30S ribosomal protein S11"/>
    <property type="match status" value="1"/>
</dbReference>
<dbReference type="Gene3D" id="3.30.420.80">
    <property type="entry name" value="Ribosomal protein S11"/>
    <property type="match status" value="1"/>
</dbReference>
<dbReference type="HAMAP" id="MF_01310">
    <property type="entry name" value="Ribosomal_uS11"/>
    <property type="match status" value="1"/>
</dbReference>
<dbReference type="InterPro" id="IPR001971">
    <property type="entry name" value="Ribosomal_uS11"/>
</dbReference>
<dbReference type="InterPro" id="IPR019981">
    <property type="entry name" value="Ribosomal_uS11_bac-type"/>
</dbReference>
<dbReference type="InterPro" id="IPR018102">
    <property type="entry name" value="Ribosomal_uS11_CS"/>
</dbReference>
<dbReference type="InterPro" id="IPR036967">
    <property type="entry name" value="Ribosomal_uS11_sf"/>
</dbReference>
<dbReference type="NCBIfam" id="NF003698">
    <property type="entry name" value="PRK05309.1"/>
    <property type="match status" value="1"/>
</dbReference>
<dbReference type="NCBIfam" id="TIGR03632">
    <property type="entry name" value="uS11_bact"/>
    <property type="match status" value="1"/>
</dbReference>
<dbReference type="PANTHER" id="PTHR11759">
    <property type="entry name" value="40S RIBOSOMAL PROTEIN S14/30S RIBOSOMAL PROTEIN S11"/>
    <property type="match status" value="1"/>
</dbReference>
<dbReference type="Pfam" id="PF00411">
    <property type="entry name" value="Ribosomal_S11"/>
    <property type="match status" value="1"/>
</dbReference>
<dbReference type="PIRSF" id="PIRSF002131">
    <property type="entry name" value="Ribosomal_S11"/>
    <property type="match status" value="1"/>
</dbReference>
<dbReference type="SUPFAM" id="SSF53137">
    <property type="entry name" value="Translational machinery components"/>
    <property type="match status" value="1"/>
</dbReference>
<dbReference type="PROSITE" id="PS00054">
    <property type="entry name" value="RIBOSOMAL_S11"/>
    <property type="match status" value="1"/>
</dbReference>
<proteinExistence type="inferred from homology"/>
<organism>
    <name type="scientific">Shewanella baltica (strain OS185)</name>
    <dbReference type="NCBI Taxonomy" id="402882"/>
    <lineage>
        <taxon>Bacteria</taxon>
        <taxon>Pseudomonadati</taxon>
        <taxon>Pseudomonadota</taxon>
        <taxon>Gammaproteobacteria</taxon>
        <taxon>Alteromonadales</taxon>
        <taxon>Shewanellaceae</taxon>
        <taxon>Shewanella</taxon>
    </lineage>
</organism>
<evidence type="ECO:0000255" key="1">
    <source>
        <dbReference type="HAMAP-Rule" id="MF_01310"/>
    </source>
</evidence>
<evidence type="ECO:0000305" key="2"/>
<name>RS11_SHEB8</name>
<gene>
    <name evidence="1" type="primary">rpsK</name>
    <name type="ordered locus">Shew185_0219</name>
</gene>
<reference key="1">
    <citation type="submission" date="2007-07" db="EMBL/GenBank/DDBJ databases">
        <title>Complete sequence of chromosome of Shewanella baltica OS185.</title>
        <authorList>
            <consortium name="US DOE Joint Genome Institute"/>
            <person name="Copeland A."/>
            <person name="Lucas S."/>
            <person name="Lapidus A."/>
            <person name="Barry K."/>
            <person name="Glavina del Rio T."/>
            <person name="Dalin E."/>
            <person name="Tice H."/>
            <person name="Pitluck S."/>
            <person name="Sims D."/>
            <person name="Brettin T."/>
            <person name="Bruce D."/>
            <person name="Detter J.C."/>
            <person name="Han C."/>
            <person name="Schmutz J."/>
            <person name="Larimer F."/>
            <person name="Land M."/>
            <person name="Hauser L."/>
            <person name="Kyrpides N."/>
            <person name="Mikhailova N."/>
            <person name="Brettar I."/>
            <person name="Rodrigues J."/>
            <person name="Konstantinidis K."/>
            <person name="Tiedje J."/>
            <person name="Richardson P."/>
        </authorList>
    </citation>
    <scope>NUCLEOTIDE SEQUENCE [LARGE SCALE GENOMIC DNA]</scope>
    <source>
        <strain>OS185</strain>
    </source>
</reference>
<keyword id="KW-0687">Ribonucleoprotein</keyword>
<keyword id="KW-0689">Ribosomal protein</keyword>
<keyword id="KW-0694">RNA-binding</keyword>
<keyword id="KW-0699">rRNA-binding</keyword>
<accession>A6WHV1</accession>